<name>YQJK_ECOLI</name>
<dbReference type="EMBL" id="U18997">
    <property type="protein sequence ID" value="AAA57904.1"/>
    <property type="molecule type" value="Genomic_DNA"/>
</dbReference>
<dbReference type="EMBL" id="U00096">
    <property type="protein sequence ID" value="AAC76135.1"/>
    <property type="molecule type" value="Genomic_DNA"/>
</dbReference>
<dbReference type="EMBL" id="AP009048">
    <property type="protein sequence ID" value="BAE77150.1"/>
    <property type="molecule type" value="Genomic_DNA"/>
</dbReference>
<dbReference type="PIR" id="A65099">
    <property type="entry name" value="A65099"/>
</dbReference>
<dbReference type="RefSeq" id="NP_417571.1">
    <property type="nucleotide sequence ID" value="NC_000913.3"/>
</dbReference>
<dbReference type="RefSeq" id="WP_000096091.1">
    <property type="nucleotide sequence ID" value="NZ_LN832404.1"/>
</dbReference>
<dbReference type="SMR" id="Q47710"/>
<dbReference type="BioGRID" id="4259659">
    <property type="interactions" value="10"/>
</dbReference>
<dbReference type="FunCoup" id="Q47710">
    <property type="interactions" value="68"/>
</dbReference>
<dbReference type="IntAct" id="Q47710">
    <property type="interactions" value="3"/>
</dbReference>
<dbReference type="STRING" id="511145.b3100"/>
<dbReference type="jPOST" id="Q47710"/>
<dbReference type="PaxDb" id="511145-b3100"/>
<dbReference type="EnsemblBacteria" id="AAC76135">
    <property type="protein sequence ID" value="AAC76135"/>
    <property type="gene ID" value="b3100"/>
</dbReference>
<dbReference type="GeneID" id="947610"/>
<dbReference type="KEGG" id="ecj:JW3071"/>
<dbReference type="KEGG" id="eco:b3100"/>
<dbReference type="KEGG" id="ecoc:C3026_16925"/>
<dbReference type="PATRIC" id="fig|511145.12.peg.3196"/>
<dbReference type="EchoBASE" id="EB4061"/>
<dbReference type="eggNOG" id="ENOG5032ZVT">
    <property type="taxonomic scope" value="Bacteria"/>
</dbReference>
<dbReference type="HOGENOM" id="CLU_170945_0_0_6"/>
<dbReference type="InParanoid" id="Q47710"/>
<dbReference type="OMA" id="DRGWQTL"/>
<dbReference type="OrthoDB" id="6504948at2"/>
<dbReference type="PhylomeDB" id="Q47710"/>
<dbReference type="BioCyc" id="EcoCyc:G7614-MONOMER"/>
<dbReference type="PRO" id="PR:Q47710"/>
<dbReference type="Proteomes" id="UP000000625">
    <property type="component" value="Chromosome"/>
</dbReference>
<dbReference type="GO" id="GO:0005829">
    <property type="term" value="C:cytosol"/>
    <property type="evidence" value="ECO:0000314"/>
    <property type="project" value="EcoCyc"/>
</dbReference>
<dbReference type="InterPro" id="IPR025612">
    <property type="entry name" value="YqjK"/>
</dbReference>
<dbReference type="Pfam" id="PF13997">
    <property type="entry name" value="YqjK"/>
    <property type="match status" value="1"/>
</dbReference>
<keyword id="KW-1185">Reference proteome</keyword>
<feature type="chain" id="PRO_0000169440" description="Uncharacterized protein YqjK">
    <location>
        <begin position="1"/>
        <end position="99"/>
    </location>
</feature>
<proteinExistence type="predicted"/>
<accession>Q47710</accession>
<accession>Q2M9A6</accession>
<protein>
    <recommendedName>
        <fullName>Uncharacterized protein YqjK</fullName>
    </recommendedName>
</protein>
<sequence length="99" mass="11811">MSSKVERERRKAQLLSQIQQQRLDLSASRREWLETTGAYDRRWNMLLSLRSWALVGSSVMAIWTIRHPNMLVRWARRGFGVWSAWRLVKTTLKQQQLRG</sequence>
<reference key="1">
    <citation type="journal article" date="1997" name="Science">
        <title>The complete genome sequence of Escherichia coli K-12.</title>
        <authorList>
            <person name="Blattner F.R."/>
            <person name="Plunkett G. III"/>
            <person name="Bloch C.A."/>
            <person name="Perna N.T."/>
            <person name="Burland V."/>
            <person name="Riley M."/>
            <person name="Collado-Vides J."/>
            <person name="Glasner J.D."/>
            <person name="Rode C.K."/>
            <person name="Mayhew G.F."/>
            <person name="Gregor J."/>
            <person name="Davis N.W."/>
            <person name="Kirkpatrick H.A."/>
            <person name="Goeden M.A."/>
            <person name="Rose D.J."/>
            <person name="Mau B."/>
            <person name="Shao Y."/>
        </authorList>
    </citation>
    <scope>NUCLEOTIDE SEQUENCE [LARGE SCALE GENOMIC DNA]</scope>
    <source>
        <strain>K12 / MG1655 / ATCC 47076</strain>
    </source>
</reference>
<reference key="2">
    <citation type="journal article" date="2006" name="Mol. Syst. Biol.">
        <title>Highly accurate genome sequences of Escherichia coli K-12 strains MG1655 and W3110.</title>
        <authorList>
            <person name="Hayashi K."/>
            <person name="Morooka N."/>
            <person name="Yamamoto Y."/>
            <person name="Fujita K."/>
            <person name="Isono K."/>
            <person name="Choi S."/>
            <person name="Ohtsubo E."/>
            <person name="Baba T."/>
            <person name="Wanner B.L."/>
            <person name="Mori H."/>
            <person name="Horiuchi T."/>
        </authorList>
    </citation>
    <scope>NUCLEOTIDE SEQUENCE [LARGE SCALE GENOMIC DNA]</scope>
    <source>
        <strain>K12 / W3110 / ATCC 27325 / DSM 5911</strain>
    </source>
</reference>
<organism>
    <name type="scientific">Escherichia coli (strain K12)</name>
    <dbReference type="NCBI Taxonomy" id="83333"/>
    <lineage>
        <taxon>Bacteria</taxon>
        <taxon>Pseudomonadati</taxon>
        <taxon>Pseudomonadota</taxon>
        <taxon>Gammaproteobacteria</taxon>
        <taxon>Enterobacterales</taxon>
        <taxon>Enterobacteriaceae</taxon>
        <taxon>Escherichia</taxon>
    </lineage>
</organism>
<gene>
    <name type="primary">yqjK</name>
    <name type="ordered locus">b3100</name>
    <name type="ordered locus">JW3071</name>
</gene>